<sequence length="464" mass="50623">MSTAALVEGKIVQCIGAVIDVEFPRESMPKIYDALILEGSELTLEVQQQLGDGVVRTICLGASDGLRRGVVVKNTGNPISVPVGKPTLGRIMDVLGRPIDEAGPIESENKRSIHQKAPAFDELSPSTELLETGIKVIDLICPFAKGGKVGLFGGAGVGKTVNMMELINNIAKEHGGYSVFAGVGERTREGNDFYHEMKDSNVLDKVALVYGQMNEPPGNRLRVALTGLTMAEHFRDEGLDVLFFVDNIYRFTLAGTEVSALLGRMPSAVGYQPTLAEEMGKLQERITSTKKGSITSVQAVYVPADDLTDPSPATTFGHLDATVVLSRDIASLGIYPAVDPLDSTSRQIDPNVIGEEHYSITRRVQQTLQRYKELRDIIAILGMDELSPEDKLSVARARKIQRFLSQPFHVAEVFTGSPGKYVPLKETIRGFKMIVDGECDHLPEQAFYMVGTIDEAFEKAKKIQ</sequence>
<feature type="chain" id="PRO_0000339490" description="ATP synthase subunit beta 1">
    <location>
        <begin position="1"/>
        <end position="464"/>
    </location>
</feature>
<feature type="binding site" evidence="1">
    <location>
        <begin position="153"/>
        <end position="160"/>
    </location>
    <ligand>
        <name>ATP</name>
        <dbReference type="ChEBI" id="CHEBI:30616"/>
    </ligand>
</feature>
<reference key="1">
    <citation type="journal article" date="2010" name="Genome Biol. Evol.">
        <title>Continuing evolution of Burkholderia mallei through genome reduction and large-scale rearrangements.</title>
        <authorList>
            <person name="Losada L."/>
            <person name="Ronning C.M."/>
            <person name="DeShazer D."/>
            <person name="Woods D."/>
            <person name="Fedorova N."/>
            <person name="Kim H.S."/>
            <person name="Shabalina S.A."/>
            <person name="Pearson T.R."/>
            <person name="Brinkac L."/>
            <person name="Tan P."/>
            <person name="Nandi T."/>
            <person name="Crabtree J."/>
            <person name="Badger J."/>
            <person name="Beckstrom-Sternberg S."/>
            <person name="Saqib M."/>
            <person name="Schutzer S.E."/>
            <person name="Keim P."/>
            <person name="Nierman W.C."/>
        </authorList>
    </citation>
    <scope>NUCLEOTIDE SEQUENCE [LARGE SCALE GENOMIC DNA]</scope>
    <source>
        <strain>SAVP1</strain>
    </source>
</reference>
<comment type="function">
    <text evidence="1">Produces ATP from ADP in the presence of a proton gradient across the membrane. The catalytic sites are hosted primarily by the beta subunits.</text>
</comment>
<comment type="catalytic activity">
    <reaction evidence="1">
        <text>ATP + H2O + 4 H(+)(in) = ADP + phosphate + 5 H(+)(out)</text>
        <dbReference type="Rhea" id="RHEA:57720"/>
        <dbReference type="ChEBI" id="CHEBI:15377"/>
        <dbReference type="ChEBI" id="CHEBI:15378"/>
        <dbReference type="ChEBI" id="CHEBI:30616"/>
        <dbReference type="ChEBI" id="CHEBI:43474"/>
        <dbReference type="ChEBI" id="CHEBI:456216"/>
        <dbReference type="EC" id="7.1.2.2"/>
    </reaction>
</comment>
<comment type="subunit">
    <text evidence="1">F-type ATPases have 2 components, CF(1) - the catalytic core - and CF(0) - the membrane proton channel. CF(1) has five subunits: alpha(3), beta(3), gamma(1), delta(1), epsilon(1). CF(0) has three main subunits: a(1), b(2) and c(9-12). The alpha and beta chains form an alternating ring which encloses part of the gamma chain. CF(1) is attached to CF(0) by a central stalk formed by the gamma and epsilon chains, while a peripheral stalk is formed by the delta and b chains.</text>
</comment>
<comment type="subcellular location">
    <subcellularLocation>
        <location evidence="1">Cell inner membrane</location>
        <topology evidence="1">Peripheral membrane protein</topology>
    </subcellularLocation>
</comment>
<comment type="similarity">
    <text evidence="1">Belongs to the ATPase alpha/beta chains family.</text>
</comment>
<protein>
    <recommendedName>
        <fullName evidence="1">ATP synthase subunit beta 1</fullName>
        <ecNumber evidence="1">7.1.2.2</ecNumber>
    </recommendedName>
    <alternativeName>
        <fullName evidence="1">ATP synthase F1 sector subunit beta 1</fullName>
    </alternativeName>
    <alternativeName>
        <fullName evidence="1">F-ATPase subunit beta 1</fullName>
    </alternativeName>
</protein>
<accession>A1V8T1</accession>
<name>ATPB1_BURMS</name>
<organism>
    <name type="scientific">Burkholderia mallei (strain SAVP1)</name>
    <dbReference type="NCBI Taxonomy" id="320388"/>
    <lineage>
        <taxon>Bacteria</taxon>
        <taxon>Pseudomonadati</taxon>
        <taxon>Pseudomonadota</taxon>
        <taxon>Betaproteobacteria</taxon>
        <taxon>Burkholderiales</taxon>
        <taxon>Burkholderiaceae</taxon>
        <taxon>Burkholderia</taxon>
        <taxon>pseudomallei group</taxon>
    </lineage>
</organism>
<evidence type="ECO:0000255" key="1">
    <source>
        <dbReference type="HAMAP-Rule" id="MF_01347"/>
    </source>
</evidence>
<keyword id="KW-0066">ATP synthesis</keyword>
<keyword id="KW-0067">ATP-binding</keyword>
<keyword id="KW-0997">Cell inner membrane</keyword>
<keyword id="KW-1003">Cell membrane</keyword>
<keyword id="KW-0139">CF(1)</keyword>
<keyword id="KW-0375">Hydrogen ion transport</keyword>
<keyword id="KW-0406">Ion transport</keyword>
<keyword id="KW-0472">Membrane</keyword>
<keyword id="KW-0547">Nucleotide-binding</keyword>
<keyword id="KW-1278">Translocase</keyword>
<keyword id="KW-0813">Transport</keyword>
<gene>
    <name evidence="1" type="primary">atpD1</name>
    <name type="ordered locus">BMASAVP1_A3355</name>
</gene>
<dbReference type="EC" id="7.1.2.2" evidence="1"/>
<dbReference type="EMBL" id="CP000526">
    <property type="protein sequence ID" value="ABM50913.1"/>
    <property type="molecule type" value="Genomic_DNA"/>
</dbReference>
<dbReference type="SMR" id="A1V8T1"/>
<dbReference type="KEGG" id="bmv:BMASAVP1_A3355"/>
<dbReference type="HOGENOM" id="CLU_022398_0_2_4"/>
<dbReference type="GO" id="GO:0005886">
    <property type="term" value="C:plasma membrane"/>
    <property type="evidence" value="ECO:0007669"/>
    <property type="project" value="UniProtKB-SubCell"/>
</dbReference>
<dbReference type="GO" id="GO:0045259">
    <property type="term" value="C:proton-transporting ATP synthase complex"/>
    <property type="evidence" value="ECO:0007669"/>
    <property type="project" value="UniProtKB-KW"/>
</dbReference>
<dbReference type="GO" id="GO:0005524">
    <property type="term" value="F:ATP binding"/>
    <property type="evidence" value="ECO:0007669"/>
    <property type="project" value="UniProtKB-UniRule"/>
</dbReference>
<dbReference type="GO" id="GO:0016887">
    <property type="term" value="F:ATP hydrolysis activity"/>
    <property type="evidence" value="ECO:0007669"/>
    <property type="project" value="InterPro"/>
</dbReference>
<dbReference type="GO" id="GO:0046933">
    <property type="term" value="F:proton-transporting ATP synthase activity, rotational mechanism"/>
    <property type="evidence" value="ECO:0007669"/>
    <property type="project" value="UniProtKB-UniRule"/>
</dbReference>
<dbReference type="CDD" id="cd18110">
    <property type="entry name" value="ATP-synt_F1_beta_C"/>
    <property type="match status" value="1"/>
</dbReference>
<dbReference type="CDD" id="cd18115">
    <property type="entry name" value="ATP-synt_F1_beta_N"/>
    <property type="match status" value="1"/>
</dbReference>
<dbReference type="CDD" id="cd01133">
    <property type="entry name" value="F1-ATPase_beta_CD"/>
    <property type="match status" value="1"/>
</dbReference>
<dbReference type="FunFam" id="1.10.1140.10:FF:000001">
    <property type="entry name" value="ATP synthase subunit beta"/>
    <property type="match status" value="1"/>
</dbReference>
<dbReference type="FunFam" id="3.40.50.300:FF:000004">
    <property type="entry name" value="ATP synthase subunit beta"/>
    <property type="match status" value="1"/>
</dbReference>
<dbReference type="Gene3D" id="2.40.10.170">
    <property type="match status" value="1"/>
</dbReference>
<dbReference type="Gene3D" id="1.10.1140.10">
    <property type="entry name" value="Bovine Mitochondrial F1-atpase, Atp Synthase Beta Chain, Chain D, domain 3"/>
    <property type="match status" value="1"/>
</dbReference>
<dbReference type="Gene3D" id="3.40.50.300">
    <property type="entry name" value="P-loop containing nucleotide triphosphate hydrolases"/>
    <property type="match status" value="1"/>
</dbReference>
<dbReference type="HAMAP" id="MF_01347">
    <property type="entry name" value="ATP_synth_beta_bact"/>
    <property type="match status" value="1"/>
</dbReference>
<dbReference type="InterPro" id="IPR003593">
    <property type="entry name" value="AAA+_ATPase"/>
</dbReference>
<dbReference type="InterPro" id="IPR055190">
    <property type="entry name" value="ATP-synt_VA_C"/>
</dbReference>
<dbReference type="InterPro" id="IPR005722">
    <property type="entry name" value="ATP_synth_F1_bsu"/>
</dbReference>
<dbReference type="InterPro" id="IPR020003">
    <property type="entry name" value="ATPase_a/bsu_AS"/>
</dbReference>
<dbReference type="InterPro" id="IPR050053">
    <property type="entry name" value="ATPase_alpha/beta_chains"/>
</dbReference>
<dbReference type="InterPro" id="IPR004100">
    <property type="entry name" value="ATPase_F1/V1/A1_a/bsu_N"/>
</dbReference>
<dbReference type="InterPro" id="IPR036121">
    <property type="entry name" value="ATPase_F1/V1/A1_a/bsu_N_sf"/>
</dbReference>
<dbReference type="InterPro" id="IPR000194">
    <property type="entry name" value="ATPase_F1/V1/A1_a/bsu_nucl-bd"/>
</dbReference>
<dbReference type="InterPro" id="IPR024034">
    <property type="entry name" value="ATPase_F1/V1_b/a_C"/>
</dbReference>
<dbReference type="InterPro" id="IPR027417">
    <property type="entry name" value="P-loop_NTPase"/>
</dbReference>
<dbReference type="NCBIfam" id="TIGR01039">
    <property type="entry name" value="atpD"/>
    <property type="match status" value="1"/>
</dbReference>
<dbReference type="PANTHER" id="PTHR15184">
    <property type="entry name" value="ATP SYNTHASE"/>
    <property type="match status" value="1"/>
</dbReference>
<dbReference type="PANTHER" id="PTHR15184:SF71">
    <property type="entry name" value="ATP SYNTHASE SUBUNIT BETA, MITOCHONDRIAL"/>
    <property type="match status" value="1"/>
</dbReference>
<dbReference type="Pfam" id="PF00006">
    <property type="entry name" value="ATP-synt_ab"/>
    <property type="match status" value="1"/>
</dbReference>
<dbReference type="Pfam" id="PF02874">
    <property type="entry name" value="ATP-synt_ab_N"/>
    <property type="match status" value="1"/>
</dbReference>
<dbReference type="Pfam" id="PF22919">
    <property type="entry name" value="ATP-synt_VA_C"/>
    <property type="match status" value="1"/>
</dbReference>
<dbReference type="SMART" id="SM00382">
    <property type="entry name" value="AAA"/>
    <property type="match status" value="1"/>
</dbReference>
<dbReference type="SUPFAM" id="SSF47917">
    <property type="entry name" value="C-terminal domain of alpha and beta subunits of F1 ATP synthase"/>
    <property type="match status" value="1"/>
</dbReference>
<dbReference type="SUPFAM" id="SSF50615">
    <property type="entry name" value="N-terminal domain of alpha and beta subunits of F1 ATP synthase"/>
    <property type="match status" value="1"/>
</dbReference>
<dbReference type="SUPFAM" id="SSF52540">
    <property type="entry name" value="P-loop containing nucleoside triphosphate hydrolases"/>
    <property type="match status" value="1"/>
</dbReference>
<dbReference type="PROSITE" id="PS00152">
    <property type="entry name" value="ATPASE_ALPHA_BETA"/>
    <property type="match status" value="1"/>
</dbReference>
<proteinExistence type="inferred from homology"/>